<dbReference type="EMBL" id="CU207366">
    <property type="protein sequence ID" value="CAL67786.1"/>
    <property type="molecule type" value="Genomic_DNA"/>
</dbReference>
<dbReference type="RefSeq" id="WP_011710689.1">
    <property type="nucleotide sequence ID" value="NC_008571.1"/>
</dbReference>
<dbReference type="SMR" id="A0M591"/>
<dbReference type="STRING" id="411154.GFO_2832"/>
<dbReference type="KEGG" id="gfo:GFO_2832"/>
<dbReference type="eggNOG" id="COG0197">
    <property type="taxonomic scope" value="Bacteria"/>
</dbReference>
<dbReference type="HOGENOM" id="CLU_078858_2_1_10"/>
<dbReference type="OrthoDB" id="9802589at2"/>
<dbReference type="Proteomes" id="UP000000755">
    <property type="component" value="Chromosome"/>
</dbReference>
<dbReference type="GO" id="GO:0022625">
    <property type="term" value="C:cytosolic large ribosomal subunit"/>
    <property type="evidence" value="ECO:0007669"/>
    <property type="project" value="TreeGrafter"/>
</dbReference>
<dbReference type="GO" id="GO:0019843">
    <property type="term" value="F:rRNA binding"/>
    <property type="evidence" value="ECO:0007669"/>
    <property type="project" value="UniProtKB-UniRule"/>
</dbReference>
<dbReference type="GO" id="GO:0003735">
    <property type="term" value="F:structural constituent of ribosome"/>
    <property type="evidence" value="ECO:0007669"/>
    <property type="project" value="InterPro"/>
</dbReference>
<dbReference type="GO" id="GO:0000049">
    <property type="term" value="F:tRNA binding"/>
    <property type="evidence" value="ECO:0007669"/>
    <property type="project" value="UniProtKB-KW"/>
</dbReference>
<dbReference type="GO" id="GO:0006412">
    <property type="term" value="P:translation"/>
    <property type="evidence" value="ECO:0007669"/>
    <property type="project" value="UniProtKB-UniRule"/>
</dbReference>
<dbReference type="CDD" id="cd01433">
    <property type="entry name" value="Ribosomal_L16_L10e"/>
    <property type="match status" value="1"/>
</dbReference>
<dbReference type="FunFam" id="3.90.1170.10:FF:000001">
    <property type="entry name" value="50S ribosomal protein L16"/>
    <property type="match status" value="1"/>
</dbReference>
<dbReference type="Gene3D" id="3.90.1170.10">
    <property type="entry name" value="Ribosomal protein L10e/L16"/>
    <property type="match status" value="1"/>
</dbReference>
<dbReference type="HAMAP" id="MF_01342">
    <property type="entry name" value="Ribosomal_uL16"/>
    <property type="match status" value="1"/>
</dbReference>
<dbReference type="InterPro" id="IPR047873">
    <property type="entry name" value="Ribosomal_uL16"/>
</dbReference>
<dbReference type="InterPro" id="IPR000114">
    <property type="entry name" value="Ribosomal_uL16_bact-type"/>
</dbReference>
<dbReference type="InterPro" id="IPR020798">
    <property type="entry name" value="Ribosomal_uL16_CS"/>
</dbReference>
<dbReference type="InterPro" id="IPR016180">
    <property type="entry name" value="Ribosomal_uL16_dom"/>
</dbReference>
<dbReference type="InterPro" id="IPR036920">
    <property type="entry name" value="Ribosomal_uL16_sf"/>
</dbReference>
<dbReference type="NCBIfam" id="TIGR01164">
    <property type="entry name" value="rplP_bact"/>
    <property type="match status" value="1"/>
</dbReference>
<dbReference type="PANTHER" id="PTHR12220">
    <property type="entry name" value="50S/60S RIBOSOMAL PROTEIN L16"/>
    <property type="match status" value="1"/>
</dbReference>
<dbReference type="PANTHER" id="PTHR12220:SF13">
    <property type="entry name" value="LARGE RIBOSOMAL SUBUNIT PROTEIN UL16M"/>
    <property type="match status" value="1"/>
</dbReference>
<dbReference type="Pfam" id="PF00252">
    <property type="entry name" value="Ribosomal_L16"/>
    <property type="match status" value="1"/>
</dbReference>
<dbReference type="PRINTS" id="PR00060">
    <property type="entry name" value="RIBOSOMALL16"/>
</dbReference>
<dbReference type="SUPFAM" id="SSF54686">
    <property type="entry name" value="Ribosomal protein L16p/L10e"/>
    <property type="match status" value="1"/>
</dbReference>
<dbReference type="PROSITE" id="PS00701">
    <property type="entry name" value="RIBOSOMAL_L16_2"/>
    <property type="match status" value="1"/>
</dbReference>
<gene>
    <name evidence="1" type="primary">rplP</name>
    <name type="ordered locus">GFO_2832</name>
</gene>
<protein>
    <recommendedName>
        <fullName evidence="1">Large ribosomal subunit protein uL16</fullName>
    </recommendedName>
    <alternativeName>
        <fullName evidence="3">50S ribosomal protein L16</fullName>
    </alternativeName>
</protein>
<feature type="chain" id="PRO_1000054628" description="Large ribosomal subunit protein uL16">
    <location>
        <begin position="1"/>
        <end position="139"/>
    </location>
</feature>
<feature type="region of interest" description="Disordered" evidence="2">
    <location>
        <begin position="1"/>
        <end position="25"/>
    </location>
</feature>
<feature type="compositionally biased region" description="Basic residues" evidence="2">
    <location>
        <begin position="1"/>
        <end position="17"/>
    </location>
</feature>
<keyword id="KW-0687">Ribonucleoprotein</keyword>
<keyword id="KW-0689">Ribosomal protein</keyword>
<keyword id="KW-0694">RNA-binding</keyword>
<keyword id="KW-0699">rRNA-binding</keyword>
<keyword id="KW-0820">tRNA-binding</keyword>
<accession>A0M591</accession>
<organism>
    <name type="scientific">Christiangramia forsetii (strain DSM 17595 / CGMCC 1.15422 / KT0803)</name>
    <name type="common">Gramella forsetii</name>
    <dbReference type="NCBI Taxonomy" id="411154"/>
    <lineage>
        <taxon>Bacteria</taxon>
        <taxon>Pseudomonadati</taxon>
        <taxon>Bacteroidota</taxon>
        <taxon>Flavobacteriia</taxon>
        <taxon>Flavobacteriales</taxon>
        <taxon>Flavobacteriaceae</taxon>
        <taxon>Christiangramia</taxon>
    </lineage>
</organism>
<proteinExistence type="inferred from homology"/>
<name>RL16_CHRFK</name>
<evidence type="ECO:0000255" key="1">
    <source>
        <dbReference type="HAMAP-Rule" id="MF_01342"/>
    </source>
</evidence>
<evidence type="ECO:0000256" key="2">
    <source>
        <dbReference type="SAM" id="MobiDB-lite"/>
    </source>
</evidence>
<evidence type="ECO:0000305" key="3"/>
<comment type="function">
    <text evidence="1">Binds 23S rRNA and is also seen to make contacts with the A and possibly P site tRNAs.</text>
</comment>
<comment type="subunit">
    <text evidence="1">Part of the 50S ribosomal subunit.</text>
</comment>
<comment type="similarity">
    <text evidence="1">Belongs to the universal ribosomal protein uL16 family.</text>
</comment>
<reference key="1">
    <citation type="journal article" date="2006" name="Environ. Microbiol.">
        <title>Whole genome analysis of the marine Bacteroidetes'Gramella forsetii' reveals adaptations to degradation of polymeric organic matter.</title>
        <authorList>
            <person name="Bauer M."/>
            <person name="Kube M."/>
            <person name="Teeling H."/>
            <person name="Richter M."/>
            <person name="Lombardot T."/>
            <person name="Allers E."/>
            <person name="Wuerdemann C.A."/>
            <person name="Quast C."/>
            <person name="Kuhl H."/>
            <person name="Knaust F."/>
            <person name="Woebken D."/>
            <person name="Bischof K."/>
            <person name="Mussmann M."/>
            <person name="Choudhuri J.V."/>
            <person name="Meyer F."/>
            <person name="Reinhardt R."/>
            <person name="Amann R.I."/>
            <person name="Gloeckner F.O."/>
        </authorList>
    </citation>
    <scope>NUCLEOTIDE SEQUENCE [LARGE SCALE GENOMIC DNA]</scope>
    <source>
        <strain>DSM 17595 / CGMCC 1.15422 / KT0803</strain>
    </source>
</reference>
<sequence>MLQPKRTKYRKQQKGRMKGLSQRGHRLSNGTFGIKSMDSSFVTARQIEAARIAATRYMKREGSIWIKIFPDKPITKKPLEVRMGKGKGAVEYWAAVVKPGRIMFEIGGVPMDVAKEALRLAAQKLPVRTKFVVARDYQE</sequence>